<keyword id="KW-0067">ATP-binding</keyword>
<keyword id="KW-0436">Ligase</keyword>
<keyword id="KW-0547">Nucleotide-binding</keyword>
<keyword id="KW-0648">Protein biosynthesis</keyword>
<keyword id="KW-1185">Reference proteome</keyword>
<reference key="1">
    <citation type="journal article" date="2005" name="Infect. Immun.">
        <title>Whole-genome analyses of speciation events in pathogenic Brucellae.</title>
        <authorList>
            <person name="Chain P.S."/>
            <person name="Comerci D.J."/>
            <person name="Tolmasky M.E."/>
            <person name="Larimer F.W."/>
            <person name="Malfatti S.A."/>
            <person name="Vergez L.M."/>
            <person name="Aguero F."/>
            <person name="Land M.L."/>
            <person name="Ugalde R.A."/>
            <person name="Garcia E."/>
        </authorList>
    </citation>
    <scope>NUCLEOTIDE SEQUENCE [LARGE SCALE GENOMIC DNA]</scope>
    <source>
        <strain>2308</strain>
    </source>
</reference>
<organism>
    <name type="scientific">Brucella abortus (strain 2308)</name>
    <dbReference type="NCBI Taxonomy" id="359391"/>
    <lineage>
        <taxon>Bacteria</taxon>
        <taxon>Pseudomonadati</taxon>
        <taxon>Pseudomonadota</taxon>
        <taxon>Alphaproteobacteria</taxon>
        <taxon>Hyphomicrobiales</taxon>
        <taxon>Brucellaceae</taxon>
        <taxon>Brucella/Ochrobactrum group</taxon>
        <taxon>Brucella</taxon>
    </lineage>
</organism>
<name>GATB_BRUA2</name>
<proteinExistence type="inferred from homology"/>
<accession>Q2YNL2</accession>
<comment type="function">
    <text evidence="1">Allows the formation of correctly charged Asn-tRNA(Asn) or Gln-tRNA(Gln) through the transamidation of misacylated Asp-tRNA(Asn) or Glu-tRNA(Gln) in organisms which lack either or both of asparaginyl-tRNA or glutaminyl-tRNA synthetases. The reaction takes place in the presence of glutamine and ATP through an activated phospho-Asp-tRNA(Asn) or phospho-Glu-tRNA(Gln).</text>
</comment>
<comment type="catalytic activity">
    <reaction evidence="1">
        <text>L-glutamyl-tRNA(Gln) + L-glutamine + ATP + H2O = L-glutaminyl-tRNA(Gln) + L-glutamate + ADP + phosphate + H(+)</text>
        <dbReference type="Rhea" id="RHEA:17521"/>
        <dbReference type="Rhea" id="RHEA-COMP:9681"/>
        <dbReference type="Rhea" id="RHEA-COMP:9684"/>
        <dbReference type="ChEBI" id="CHEBI:15377"/>
        <dbReference type="ChEBI" id="CHEBI:15378"/>
        <dbReference type="ChEBI" id="CHEBI:29985"/>
        <dbReference type="ChEBI" id="CHEBI:30616"/>
        <dbReference type="ChEBI" id="CHEBI:43474"/>
        <dbReference type="ChEBI" id="CHEBI:58359"/>
        <dbReference type="ChEBI" id="CHEBI:78520"/>
        <dbReference type="ChEBI" id="CHEBI:78521"/>
        <dbReference type="ChEBI" id="CHEBI:456216"/>
    </reaction>
</comment>
<comment type="catalytic activity">
    <reaction evidence="1">
        <text>L-aspartyl-tRNA(Asn) + L-glutamine + ATP + H2O = L-asparaginyl-tRNA(Asn) + L-glutamate + ADP + phosphate + 2 H(+)</text>
        <dbReference type="Rhea" id="RHEA:14513"/>
        <dbReference type="Rhea" id="RHEA-COMP:9674"/>
        <dbReference type="Rhea" id="RHEA-COMP:9677"/>
        <dbReference type="ChEBI" id="CHEBI:15377"/>
        <dbReference type="ChEBI" id="CHEBI:15378"/>
        <dbReference type="ChEBI" id="CHEBI:29985"/>
        <dbReference type="ChEBI" id="CHEBI:30616"/>
        <dbReference type="ChEBI" id="CHEBI:43474"/>
        <dbReference type="ChEBI" id="CHEBI:58359"/>
        <dbReference type="ChEBI" id="CHEBI:78515"/>
        <dbReference type="ChEBI" id="CHEBI:78516"/>
        <dbReference type="ChEBI" id="CHEBI:456216"/>
    </reaction>
</comment>
<comment type="subunit">
    <text evidence="1">Heterotrimer of A, B and C subunits.</text>
</comment>
<comment type="similarity">
    <text evidence="1">Belongs to the GatB/GatE family. GatB subfamily.</text>
</comment>
<sequence>MSIIDTRTPEPKRFISGATGDWEVVIGMEVHAQVTSESKLFSGASTAFGAEPNSNVSLVDAAMPGMLPVINLECVRQAVRTGIGLNAQINLKSVFDRKNYFYPDLPQGYQISQFKQPIVGEGKIMISVGPDNKGQFEDVEIGIERLHLEQDAGKSMHDQHPTMSYVDLNRSGVALMEIVSKPDLRSSDEARAYLTKLRTIVRYLGTCDGNMDEGSMRADVNVSVRRPGGEFGTRCEIKNVNSIRFVGQAIEYEARRQIAILEDGGVIDQETRLFDPVKGETRSMRSKEEAHDYRYFPDPDLLPLEFDQAFVDALAAKLPELPDVKKQRLVETLGISVYDASILVTEKAIADYYEAVAEGRDGKAAANWVINDLLGALNKAGKDIEESPISPAQLGAIIDLIKEGTISGKIAKDLFEIVWNEGGDPKKLVEERGMKQVTDTGAIEKAVDDVIAANPDKVEQAKAKPTLAGWFVGQVMKATGGKANPQAVNELVKSKLGIEE</sequence>
<feature type="chain" id="PRO_0000241201" description="Aspartyl/glutamyl-tRNA(Asn/Gln) amidotransferase subunit B">
    <location>
        <begin position="1"/>
        <end position="500"/>
    </location>
</feature>
<protein>
    <recommendedName>
        <fullName evidence="1">Aspartyl/glutamyl-tRNA(Asn/Gln) amidotransferase subunit B</fullName>
        <shortName evidence="1">Asp/Glu-ADT subunit B</shortName>
        <ecNumber evidence="1">6.3.5.-</ecNumber>
    </recommendedName>
</protein>
<dbReference type="EC" id="6.3.5.-" evidence="1"/>
<dbReference type="EMBL" id="AM040264">
    <property type="protein sequence ID" value="CAJ10874.1"/>
    <property type="molecule type" value="Genomic_DNA"/>
</dbReference>
<dbReference type="RefSeq" id="WP_002964030.1">
    <property type="nucleotide sequence ID" value="NZ_KN046823.1"/>
</dbReference>
<dbReference type="SMR" id="Q2YNL2"/>
<dbReference type="STRING" id="359391.BAB1_0918"/>
<dbReference type="GeneID" id="97533805"/>
<dbReference type="KEGG" id="bmf:BAB1_0918"/>
<dbReference type="PATRIC" id="fig|359391.11.peg.3229"/>
<dbReference type="HOGENOM" id="CLU_019240_0_0_5"/>
<dbReference type="PhylomeDB" id="Q2YNL2"/>
<dbReference type="Proteomes" id="UP000002719">
    <property type="component" value="Chromosome I"/>
</dbReference>
<dbReference type="GO" id="GO:0050566">
    <property type="term" value="F:asparaginyl-tRNA synthase (glutamine-hydrolyzing) activity"/>
    <property type="evidence" value="ECO:0007669"/>
    <property type="project" value="RHEA"/>
</dbReference>
<dbReference type="GO" id="GO:0005524">
    <property type="term" value="F:ATP binding"/>
    <property type="evidence" value="ECO:0007669"/>
    <property type="project" value="UniProtKB-KW"/>
</dbReference>
<dbReference type="GO" id="GO:0050567">
    <property type="term" value="F:glutaminyl-tRNA synthase (glutamine-hydrolyzing) activity"/>
    <property type="evidence" value="ECO:0007669"/>
    <property type="project" value="UniProtKB-UniRule"/>
</dbReference>
<dbReference type="GO" id="GO:0070681">
    <property type="term" value="P:glutaminyl-tRNAGln biosynthesis via transamidation"/>
    <property type="evidence" value="ECO:0007669"/>
    <property type="project" value="TreeGrafter"/>
</dbReference>
<dbReference type="GO" id="GO:0006412">
    <property type="term" value="P:translation"/>
    <property type="evidence" value="ECO:0007669"/>
    <property type="project" value="UniProtKB-UniRule"/>
</dbReference>
<dbReference type="FunFam" id="1.10.10.410:FF:000001">
    <property type="entry name" value="Aspartyl/glutamyl-tRNA(Asn/Gln) amidotransferase subunit B"/>
    <property type="match status" value="1"/>
</dbReference>
<dbReference type="Gene3D" id="1.10.10.410">
    <property type="match status" value="1"/>
</dbReference>
<dbReference type="Gene3D" id="1.10.150.380">
    <property type="entry name" value="GatB domain, N-terminal subdomain"/>
    <property type="match status" value="1"/>
</dbReference>
<dbReference type="HAMAP" id="MF_00121">
    <property type="entry name" value="GatB"/>
    <property type="match status" value="1"/>
</dbReference>
<dbReference type="InterPro" id="IPR017959">
    <property type="entry name" value="Asn/Gln-tRNA_amidoTrfase_suB/E"/>
</dbReference>
<dbReference type="InterPro" id="IPR006075">
    <property type="entry name" value="Asn/Gln-tRNA_Trfase_suB/E_cat"/>
</dbReference>
<dbReference type="InterPro" id="IPR018027">
    <property type="entry name" value="Asn/Gln_amidotransferase"/>
</dbReference>
<dbReference type="InterPro" id="IPR003789">
    <property type="entry name" value="Asn/Gln_tRNA_amidoTrase-B-like"/>
</dbReference>
<dbReference type="InterPro" id="IPR004413">
    <property type="entry name" value="GatB"/>
</dbReference>
<dbReference type="InterPro" id="IPR042114">
    <property type="entry name" value="GatB_C_1"/>
</dbReference>
<dbReference type="InterPro" id="IPR023168">
    <property type="entry name" value="GatB_Yqey_C_2"/>
</dbReference>
<dbReference type="InterPro" id="IPR017958">
    <property type="entry name" value="Gln-tRNA_amidoTrfase_suB_CS"/>
</dbReference>
<dbReference type="InterPro" id="IPR014746">
    <property type="entry name" value="Gln_synth/guanido_kin_cat_dom"/>
</dbReference>
<dbReference type="NCBIfam" id="TIGR00133">
    <property type="entry name" value="gatB"/>
    <property type="match status" value="1"/>
</dbReference>
<dbReference type="NCBIfam" id="NF004012">
    <property type="entry name" value="PRK05477.1-2"/>
    <property type="match status" value="1"/>
</dbReference>
<dbReference type="NCBIfam" id="NF004014">
    <property type="entry name" value="PRK05477.1-4"/>
    <property type="match status" value="1"/>
</dbReference>
<dbReference type="NCBIfam" id="NF004015">
    <property type="entry name" value="PRK05477.1-5"/>
    <property type="match status" value="1"/>
</dbReference>
<dbReference type="PANTHER" id="PTHR11659">
    <property type="entry name" value="GLUTAMYL-TRNA GLN AMIDOTRANSFERASE SUBUNIT B MITOCHONDRIAL AND PROKARYOTIC PET112-RELATED"/>
    <property type="match status" value="1"/>
</dbReference>
<dbReference type="PANTHER" id="PTHR11659:SF0">
    <property type="entry name" value="GLUTAMYL-TRNA(GLN) AMIDOTRANSFERASE SUBUNIT B, MITOCHONDRIAL"/>
    <property type="match status" value="1"/>
</dbReference>
<dbReference type="Pfam" id="PF02934">
    <property type="entry name" value="GatB_N"/>
    <property type="match status" value="1"/>
</dbReference>
<dbReference type="Pfam" id="PF02637">
    <property type="entry name" value="GatB_Yqey"/>
    <property type="match status" value="1"/>
</dbReference>
<dbReference type="SMART" id="SM00845">
    <property type="entry name" value="GatB_Yqey"/>
    <property type="match status" value="1"/>
</dbReference>
<dbReference type="SUPFAM" id="SSF89095">
    <property type="entry name" value="GatB/YqeY motif"/>
    <property type="match status" value="1"/>
</dbReference>
<dbReference type="SUPFAM" id="SSF55931">
    <property type="entry name" value="Glutamine synthetase/guanido kinase"/>
    <property type="match status" value="1"/>
</dbReference>
<dbReference type="PROSITE" id="PS01234">
    <property type="entry name" value="GATB"/>
    <property type="match status" value="1"/>
</dbReference>
<gene>
    <name evidence="1" type="primary">gatB</name>
    <name type="ordered locus">BAB1_0918</name>
</gene>
<evidence type="ECO:0000255" key="1">
    <source>
        <dbReference type="HAMAP-Rule" id="MF_00121"/>
    </source>
</evidence>